<protein>
    <recommendedName>
        <fullName evidence="1">N-acetyl-gamma-glutamyl-phosphate reductase</fullName>
        <shortName evidence="1">AGPR</shortName>
        <ecNumber evidence="1">1.2.1.38</ecNumber>
    </recommendedName>
    <alternativeName>
        <fullName evidence="1">N-acetyl-glutamate semialdehyde dehydrogenase</fullName>
        <shortName evidence="1">NAGSA dehydrogenase</shortName>
    </alternativeName>
</protein>
<sequence>MGESERIPVGIIGASGYGGVQLVRLLLEHPQVEIAYLGGKGSAGKPYWDLYPHLSHLVNLTVEPIDLEVVASRCQVVFLGLPNGLACDMAPQLIAKGCKVLDLSADYRFRDLQTYTAWYNKDRSDTETAAKAVYGLPELYRTEIQSASLIGCPGCYPTASLMALSPLLKQGLILPETAIIDAKSGTSGGGRQEKIHLLLAEAEGSLGAYGVAKHRHTPEIEQVCSDLAGHEVKVQFTPHLIPMVRGILSTVYASLRDPGLVRDDILTIYSAFYRSSPFVKILPHGIYPQTKWAWGTNLCYIGIETDPRTDRVIVLSAIDNLMKGQAGQAVQCLNLMMGWEETLGLPQLSFYP</sequence>
<reference key="1">
    <citation type="journal article" date="2011" name="MBio">
        <title>Novel metabolic attributes of the genus Cyanothece, comprising a group of unicellular nitrogen-fixing Cyanobacteria.</title>
        <authorList>
            <person name="Bandyopadhyay A."/>
            <person name="Elvitigala T."/>
            <person name="Welsh E."/>
            <person name="Stockel J."/>
            <person name="Liberton M."/>
            <person name="Min H."/>
            <person name="Sherman L.A."/>
            <person name="Pakrasi H.B."/>
        </authorList>
    </citation>
    <scope>NUCLEOTIDE SEQUENCE [LARGE SCALE GENOMIC DNA]</scope>
    <source>
        <strain>PCC 8801 / RF-1</strain>
    </source>
</reference>
<proteinExistence type="inferred from homology"/>
<gene>
    <name evidence="1" type="primary">argC</name>
    <name type="ordered locus">PCC8801_1946</name>
</gene>
<feature type="chain" id="PRO_1000118055" description="N-acetyl-gamma-glutamyl-phosphate reductase">
    <location>
        <begin position="1"/>
        <end position="352"/>
    </location>
</feature>
<feature type="active site" evidence="1">
    <location>
        <position position="155"/>
    </location>
</feature>
<keyword id="KW-0028">Amino-acid biosynthesis</keyword>
<keyword id="KW-0055">Arginine biosynthesis</keyword>
<keyword id="KW-0963">Cytoplasm</keyword>
<keyword id="KW-0521">NADP</keyword>
<keyword id="KW-0560">Oxidoreductase</keyword>
<keyword id="KW-1185">Reference proteome</keyword>
<comment type="function">
    <text evidence="1">Catalyzes the NADPH-dependent reduction of N-acetyl-5-glutamyl phosphate to yield N-acetyl-L-glutamate 5-semialdehyde.</text>
</comment>
<comment type="catalytic activity">
    <reaction evidence="1">
        <text>N-acetyl-L-glutamate 5-semialdehyde + phosphate + NADP(+) = N-acetyl-L-glutamyl 5-phosphate + NADPH + H(+)</text>
        <dbReference type="Rhea" id="RHEA:21588"/>
        <dbReference type="ChEBI" id="CHEBI:15378"/>
        <dbReference type="ChEBI" id="CHEBI:29123"/>
        <dbReference type="ChEBI" id="CHEBI:43474"/>
        <dbReference type="ChEBI" id="CHEBI:57783"/>
        <dbReference type="ChEBI" id="CHEBI:57936"/>
        <dbReference type="ChEBI" id="CHEBI:58349"/>
        <dbReference type="EC" id="1.2.1.38"/>
    </reaction>
</comment>
<comment type="pathway">
    <text evidence="1">Amino-acid biosynthesis; L-arginine biosynthesis; N(2)-acetyl-L-ornithine from L-glutamate: step 3/4.</text>
</comment>
<comment type="subcellular location">
    <subcellularLocation>
        <location evidence="1">Cytoplasm</location>
    </subcellularLocation>
</comment>
<comment type="similarity">
    <text evidence="1">Belongs to the NAGSA dehydrogenase family. Type 1 subfamily.</text>
</comment>
<name>ARGC_RIPO1</name>
<accession>B7JY20</accession>
<evidence type="ECO:0000255" key="1">
    <source>
        <dbReference type="HAMAP-Rule" id="MF_00150"/>
    </source>
</evidence>
<organism>
    <name type="scientific">Rippkaea orientalis (strain PCC 8801 / RF-1)</name>
    <name type="common">Cyanothece sp. (strain PCC 8801)</name>
    <dbReference type="NCBI Taxonomy" id="41431"/>
    <lineage>
        <taxon>Bacteria</taxon>
        <taxon>Bacillati</taxon>
        <taxon>Cyanobacteriota</taxon>
        <taxon>Cyanophyceae</taxon>
        <taxon>Oscillatoriophycideae</taxon>
        <taxon>Chroococcales</taxon>
        <taxon>Aphanothecaceae</taxon>
        <taxon>Rippkaea</taxon>
        <taxon>Rippkaea orientalis</taxon>
    </lineage>
</organism>
<dbReference type="EC" id="1.2.1.38" evidence="1"/>
<dbReference type="EMBL" id="CP001287">
    <property type="protein sequence ID" value="ACK65984.1"/>
    <property type="molecule type" value="Genomic_DNA"/>
</dbReference>
<dbReference type="RefSeq" id="WP_012595256.1">
    <property type="nucleotide sequence ID" value="NC_011726.1"/>
</dbReference>
<dbReference type="SMR" id="B7JY20"/>
<dbReference type="STRING" id="41431.PCC8801_1946"/>
<dbReference type="KEGG" id="cyp:PCC8801_1946"/>
<dbReference type="eggNOG" id="COG0002">
    <property type="taxonomic scope" value="Bacteria"/>
</dbReference>
<dbReference type="HOGENOM" id="CLU_006384_0_1_3"/>
<dbReference type="OrthoDB" id="9801289at2"/>
<dbReference type="UniPathway" id="UPA00068">
    <property type="reaction ID" value="UER00108"/>
</dbReference>
<dbReference type="Proteomes" id="UP000008204">
    <property type="component" value="Chromosome"/>
</dbReference>
<dbReference type="GO" id="GO:0005737">
    <property type="term" value="C:cytoplasm"/>
    <property type="evidence" value="ECO:0007669"/>
    <property type="project" value="UniProtKB-SubCell"/>
</dbReference>
<dbReference type="GO" id="GO:0003942">
    <property type="term" value="F:N-acetyl-gamma-glutamyl-phosphate reductase activity"/>
    <property type="evidence" value="ECO:0007669"/>
    <property type="project" value="UniProtKB-UniRule"/>
</dbReference>
<dbReference type="GO" id="GO:0051287">
    <property type="term" value="F:NAD binding"/>
    <property type="evidence" value="ECO:0007669"/>
    <property type="project" value="InterPro"/>
</dbReference>
<dbReference type="GO" id="GO:0070401">
    <property type="term" value="F:NADP+ binding"/>
    <property type="evidence" value="ECO:0007669"/>
    <property type="project" value="InterPro"/>
</dbReference>
<dbReference type="GO" id="GO:0006526">
    <property type="term" value="P:L-arginine biosynthetic process"/>
    <property type="evidence" value="ECO:0007669"/>
    <property type="project" value="UniProtKB-UniRule"/>
</dbReference>
<dbReference type="CDD" id="cd23934">
    <property type="entry name" value="AGPR_1_C"/>
    <property type="match status" value="1"/>
</dbReference>
<dbReference type="CDD" id="cd17895">
    <property type="entry name" value="AGPR_1_N"/>
    <property type="match status" value="1"/>
</dbReference>
<dbReference type="FunFam" id="3.30.360.10:FF:000014">
    <property type="entry name" value="N-acetyl-gamma-glutamyl-phosphate reductase"/>
    <property type="match status" value="1"/>
</dbReference>
<dbReference type="Gene3D" id="3.30.360.10">
    <property type="entry name" value="Dihydrodipicolinate Reductase, domain 2"/>
    <property type="match status" value="1"/>
</dbReference>
<dbReference type="Gene3D" id="3.40.50.720">
    <property type="entry name" value="NAD(P)-binding Rossmann-like Domain"/>
    <property type="match status" value="1"/>
</dbReference>
<dbReference type="HAMAP" id="MF_00150">
    <property type="entry name" value="ArgC_type1"/>
    <property type="match status" value="1"/>
</dbReference>
<dbReference type="InterPro" id="IPR023013">
    <property type="entry name" value="AGPR_AS"/>
</dbReference>
<dbReference type="InterPro" id="IPR000706">
    <property type="entry name" value="AGPR_type-1"/>
</dbReference>
<dbReference type="InterPro" id="IPR036291">
    <property type="entry name" value="NAD(P)-bd_dom_sf"/>
</dbReference>
<dbReference type="InterPro" id="IPR050085">
    <property type="entry name" value="NAGSA_dehydrogenase"/>
</dbReference>
<dbReference type="InterPro" id="IPR000534">
    <property type="entry name" value="Semialdehyde_DH_NAD-bd"/>
</dbReference>
<dbReference type="NCBIfam" id="TIGR01850">
    <property type="entry name" value="argC"/>
    <property type="match status" value="1"/>
</dbReference>
<dbReference type="PANTHER" id="PTHR32338:SF10">
    <property type="entry name" value="N-ACETYL-GAMMA-GLUTAMYL-PHOSPHATE REDUCTASE, CHLOROPLASTIC-RELATED"/>
    <property type="match status" value="1"/>
</dbReference>
<dbReference type="PANTHER" id="PTHR32338">
    <property type="entry name" value="N-ACETYL-GAMMA-GLUTAMYL-PHOSPHATE REDUCTASE, CHLOROPLASTIC-RELATED-RELATED"/>
    <property type="match status" value="1"/>
</dbReference>
<dbReference type="Pfam" id="PF01118">
    <property type="entry name" value="Semialdhyde_dh"/>
    <property type="match status" value="1"/>
</dbReference>
<dbReference type="Pfam" id="PF22698">
    <property type="entry name" value="Semialdhyde_dhC_1"/>
    <property type="match status" value="1"/>
</dbReference>
<dbReference type="SMART" id="SM00859">
    <property type="entry name" value="Semialdhyde_dh"/>
    <property type="match status" value="1"/>
</dbReference>
<dbReference type="SUPFAM" id="SSF55347">
    <property type="entry name" value="Glyceraldehyde-3-phosphate dehydrogenase-like, C-terminal domain"/>
    <property type="match status" value="1"/>
</dbReference>
<dbReference type="SUPFAM" id="SSF51735">
    <property type="entry name" value="NAD(P)-binding Rossmann-fold domains"/>
    <property type="match status" value="1"/>
</dbReference>
<dbReference type="PROSITE" id="PS01224">
    <property type="entry name" value="ARGC"/>
    <property type="match status" value="1"/>
</dbReference>